<gene>
    <name evidence="1" type="primary">mdtJ</name>
    <name type="ordered locus">ECED1_1769</name>
</gene>
<protein>
    <recommendedName>
        <fullName evidence="1">Spermidine export protein MdtJ</fullName>
    </recommendedName>
</protein>
<organism>
    <name type="scientific">Escherichia coli O81 (strain ED1a)</name>
    <dbReference type="NCBI Taxonomy" id="585397"/>
    <lineage>
        <taxon>Bacteria</taxon>
        <taxon>Pseudomonadati</taxon>
        <taxon>Pseudomonadota</taxon>
        <taxon>Gammaproteobacteria</taxon>
        <taxon>Enterobacterales</taxon>
        <taxon>Enterobacteriaceae</taxon>
        <taxon>Escherichia</taxon>
    </lineage>
</organism>
<dbReference type="EMBL" id="CU928162">
    <property type="protein sequence ID" value="CAR07962.2"/>
    <property type="molecule type" value="Genomic_DNA"/>
</dbReference>
<dbReference type="RefSeq" id="WP_000276149.1">
    <property type="nucleotide sequence ID" value="NC_011745.1"/>
</dbReference>
<dbReference type="SMR" id="B7MV46"/>
<dbReference type="GeneID" id="93775748"/>
<dbReference type="KEGG" id="ecq:ECED1_1769"/>
<dbReference type="HOGENOM" id="CLU_133067_0_0_6"/>
<dbReference type="Proteomes" id="UP000000748">
    <property type="component" value="Chromosome"/>
</dbReference>
<dbReference type="GO" id="GO:0005886">
    <property type="term" value="C:plasma membrane"/>
    <property type="evidence" value="ECO:0007669"/>
    <property type="project" value="UniProtKB-SubCell"/>
</dbReference>
<dbReference type="GO" id="GO:0015199">
    <property type="term" value="F:amino-acid betaine transmembrane transporter activity"/>
    <property type="evidence" value="ECO:0007669"/>
    <property type="project" value="TreeGrafter"/>
</dbReference>
<dbReference type="GO" id="GO:0015297">
    <property type="term" value="F:antiporter activity"/>
    <property type="evidence" value="ECO:0007669"/>
    <property type="project" value="TreeGrafter"/>
</dbReference>
<dbReference type="GO" id="GO:0015220">
    <property type="term" value="F:choline transmembrane transporter activity"/>
    <property type="evidence" value="ECO:0007669"/>
    <property type="project" value="TreeGrafter"/>
</dbReference>
<dbReference type="GO" id="GO:0015606">
    <property type="term" value="F:spermidine transmembrane transporter activity"/>
    <property type="evidence" value="ECO:0007669"/>
    <property type="project" value="UniProtKB-UniRule"/>
</dbReference>
<dbReference type="GO" id="GO:0031460">
    <property type="term" value="P:glycine betaine transport"/>
    <property type="evidence" value="ECO:0007669"/>
    <property type="project" value="TreeGrafter"/>
</dbReference>
<dbReference type="FunFam" id="1.10.3730.20:FF:000001">
    <property type="entry name" value="Quaternary ammonium compound resistance transporter SugE"/>
    <property type="match status" value="1"/>
</dbReference>
<dbReference type="Gene3D" id="1.10.3730.20">
    <property type="match status" value="1"/>
</dbReference>
<dbReference type="HAMAP" id="MF_01598">
    <property type="entry name" value="MdtJ"/>
    <property type="match status" value="1"/>
</dbReference>
<dbReference type="InterPro" id="IPR000390">
    <property type="entry name" value="Small_drug/metabolite_transptr"/>
</dbReference>
<dbReference type="InterPro" id="IPR045324">
    <property type="entry name" value="Small_multidrug_res"/>
</dbReference>
<dbReference type="InterPro" id="IPR023740">
    <property type="entry name" value="Spermidine_export_MdtJ"/>
</dbReference>
<dbReference type="NCBIfam" id="NF007767">
    <property type="entry name" value="PRK10452.1"/>
    <property type="match status" value="1"/>
</dbReference>
<dbReference type="PANTHER" id="PTHR30561">
    <property type="entry name" value="SMR FAMILY PROTON-DEPENDENT DRUG EFFLUX TRANSPORTER SUGE"/>
    <property type="match status" value="1"/>
</dbReference>
<dbReference type="PANTHER" id="PTHR30561:SF2">
    <property type="entry name" value="SPERMIDINE EXPORT PROTEIN MDTJ"/>
    <property type="match status" value="1"/>
</dbReference>
<dbReference type="Pfam" id="PF00893">
    <property type="entry name" value="Multi_Drug_Res"/>
    <property type="match status" value="1"/>
</dbReference>
<dbReference type="SUPFAM" id="SSF103481">
    <property type="entry name" value="Multidrug resistance efflux transporter EmrE"/>
    <property type="match status" value="1"/>
</dbReference>
<proteinExistence type="inferred from homology"/>
<evidence type="ECO:0000255" key="1">
    <source>
        <dbReference type="HAMAP-Rule" id="MF_01598"/>
    </source>
</evidence>
<reference key="1">
    <citation type="journal article" date="2009" name="PLoS Genet.">
        <title>Organised genome dynamics in the Escherichia coli species results in highly diverse adaptive paths.</title>
        <authorList>
            <person name="Touchon M."/>
            <person name="Hoede C."/>
            <person name="Tenaillon O."/>
            <person name="Barbe V."/>
            <person name="Baeriswyl S."/>
            <person name="Bidet P."/>
            <person name="Bingen E."/>
            <person name="Bonacorsi S."/>
            <person name="Bouchier C."/>
            <person name="Bouvet O."/>
            <person name="Calteau A."/>
            <person name="Chiapello H."/>
            <person name="Clermont O."/>
            <person name="Cruveiller S."/>
            <person name="Danchin A."/>
            <person name="Diard M."/>
            <person name="Dossat C."/>
            <person name="Karoui M.E."/>
            <person name="Frapy E."/>
            <person name="Garry L."/>
            <person name="Ghigo J.M."/>
            <person name="Gilles A.M."/>
            <person name="Johnson J."/>
            <person name="Le Bouguenec C."/>
            <person name="Lescat M."/>
            <person name="Mangenot S."/>
            <person name="Martinez-Jehanne V."/>
            <person name="Matic I."/>
            <person name="Nassif X."/>
            <person name="Oztas S."/>
            <person name="Petit M.A."/>
            <person name="Pichon C."/>
            <person name="Rouy Z."/>
            <person name="Ruf C.S."/>
            <person name="Schneider D."/>
            <person name="Tourret J."/>
            <person name="Vacherie B."/>
            <person name="Vallenet D."/>
            <person name="Medigue C."/>
            <person name="Rocha E.P.C."/>
            <person name="Denamur E."/>
        </authorList>
    </citation>
    <scope>NUCLEOTIDE SEQUENCE [LARGE SCALE GENOMIC DNA]</scope>
    <source>
        <strain>ED1a</strain>
    </source>
</reference>
<feature type="chain" id="PRO_1000185774" description="Spermidine export protein MdtJ">
    <location>
        <begin position="1"/>
        <end position="121"/>
    </location>
</feature>
<feature type="transmembrane region" description="Helical" evidence="1">
    <location>
        <begin position="1"/>
        <end position="21"/>
    </location>
</feature>
<feature type="transmembrane region" description="Helical" evidence="1">
    <location>
        <begin position="32"/>
        <end position="52"/>
    </location>
</feature>
<feature type="transmembrane region" description="Helical" evidence="1">
    <location>
        <begin position="55"/>
        <end position="75"/>
    </location>
</feature>
<feature type="transmembrane region" description="Helical" evidence="1">
    <location>
        <begin position="82"/>
        <end position="102"/>
    </location>
</feature>
<accession>B7MV46</accession>
<sequence>MYIYWILLGLAIATEITGTLSMKWASVSEGNGGFILMLVMISLSYIFLSFAVKKIALGVAYALWEGIGILFITLFSVLLFDESLSLMKIAGLTTLVAGIVLIKSGTRKARKPELEVNHGAV</sequence>
<name>MDTJ_ECO81</name>
<comment type="function">
    <text evidence="1">Catalyzes the excretion of spermidine.</text>
</comment>
<comment type="subunit">
    <text evidence="1">Forms a complex with MdtI.</text>
</comment>
<comment type="subcellular location">
    <subcellularLocation>
        <location evidence="1">Cell inner membrane</location>
        <topology evidence="1">Multi-pass membrane protein</topology>
    </subcellularLocation>
</comment>
<comment type="similarity">
    <text evidence="1">Belongs to the drug/metabolite transporter (DMT) superfamily. Small multidrug resistance (SMR) (TC 2.A.7.1) family. MdtJ subfamily.</text>
</comment>
<keyword id="KW-0997">Cell inner membrane</keyword>
<keyword id="KW-1003">Cell membrane</keyword>
<keyword id="KW-0472">Membrane</keyword>
<keyword id="KW-0812">Transmembrane</keyword>
<keyword id="KW-1133">Transmembrane helix</keyword>
<keyword id="KW-0813">Transport</keyword>